<reference key="1">
    <citation type="journal article" date="2009" name="Appl. Environ. Microbiol.">
        <title>Complete genome sequence of the chemolithoautotrophic marine magnetotactic coccus strain MC-1.</title>
        <authorList>
            <person name="Schubbe S."/>
            <person name="Williams T.J."/>
            <person name="Xie G."/>
            <person name="Kiss H.E."/>
            <person name="Brettin T.S."/>
            <person name="Martinez D."/>
            <person name="Ross C.A."/>
            <person name="Schuler D."/>
            <person name="Cox B.L."/>
            <person name="Nealson K.H."/>
            <person name="Bazylinski D.A."/>
        </authorList>
    </citation>
    <scope>NUCLEOTIDE SEQUENCE [LARGE SCALE GENOMIC DNA]</scope>
    <source>
        <strain>ATCC BAA-1437 / JCM 17883 / MC-1</strain>
    </source>
</reference>
<protein>
    <recommendedName>
        <fullName evidence="1">Methionyl-tRNA formyltransferase</fullName>
        <ecNumber evidence="1">2.1.2.9</ecNumber>
    </recommendedName>
</protein>
<gene>
    <name evidence="1" type="primary">fmt</name>
    <name type="ordered locus">Mmc1_0143</name>
</gene>
<keyword id="KW-0648">Protein biosynthesis</keyword>
<keyword id="KW-1185">Reference proteome</keyword>
<keyword id="KW-0808">Transferase</keyword>
<organism>
    <name type="scientific">Magnetococcus marinus (strain ATCC BAA-1437 / JCM 17883 / MC-1)</name>
    <dbReference type="NCBI Taxonomy" id="156889"/>
    <lineage>
        <taxon>Bacteria</taxon>
        <taxon>Pseudomonadati</taxon>
        <taxon>Pseudomonadota</taxon>
        <taxon>Alphaproteobacteria</taxon>
        <taxon>Magnetococcales</taxon>
        <taxon>Magnetococcaceae</taxon>
        <taxon>Magnetococcus</taxon>
    </lineage>
</organism>
<comment type="function">
    <text evidence="1">Attaches a formyl group to the free amino group of methionyl-tRNA(fMet). The formyl group appears to play a dual role in the initiator identity of N-formylmethionyl-tRNA by promoting its recognition by IF2 and preventing the misappropriation of this tRNA by the elongation apparatus.</text>
</comment>
<comment type="catalytic activity">
    <reaction evidence="1">
        <text>L-methionyl-tRNA(fMet) + (6R)-10-formyltetrahydrofolate = N-formyl-L-methionyl-tRNA(fMet) + (6S)-5,6,7,8-tetrahydrofolate + H(+)</text>
        <dbReference type="Rhea" id="RHEA:24380"/>
        <dbReference type="Rhea" id="RHEA-COMP:9952"/>
        <dbReference type="Rhea" id="RHEA-COMP:9953"/>
        <dbReference type="ChEBI" id="CHEBI:15378"/>
        <dbReference type="ChEBI" id="CHEBI:57453"/>
        <dbReference type="ChEBI" id="CHEBI:78530"/>
        <dbReference type="ChEBI" id="CHEBI:78844"/>
        <dbReference type="ChEBI" id="CHEBI:195366"/>
        <dbReference type="EC" id="2.1.2.9"/>
    </reaction>
</comment>
<comment type="similarity">
    <text evidence="1">Belongs to the Fmt family.</text>
</comment>
<dbReference type="EC" id="2.1.2.9" evidence="1"/>
<dbReference type="EMBL" id="CP000471">
    <property type="protein sequence ID" value="ABK42670.1"/>
    <property type="molecule type" value="Genomic_DNA"/>
</dbReference>
<dbReference type="RefSeq" id="WP_011711843.1">
    <property type="nucleotide sequence ID" value="NC_008576.1"/>
</dbReference>
<dbReference type="SMR" id="A0L3X7"/>
<dbReference type="STRING" id="156889.Mmc1_0143"/>
<dbReference type="KEGG" id="mgm:Mmc1_0143"/>
<dbReference type="eggNOG" id="COG0223">
    <property type="taxonomic scope" value="Bacteria"/>
</dbReference>
<dbReference type="HOGENOM" id="CLU_033347_1_2_5"/>
<dbReference type="OrthoDB" id="9802815at2"/>
<dbReference type="Proteomes" id="UP000002586">
    <property type="component" value="Chromosome"/>
</dbReference>
<dbReference type="GO" id="GO:0005829">
    <property type="term" value="C:cytosol"/>
    <property type="evidence" value="ECO:0007669"/>
    <property type="project" value="TreeGrafter"/>
</dbReference>
<dbReference type="GO" id="GO:0004479">
    <property type="term" value="F:methionyl-tRNA formyltransferase activity"/>
    <property type="evidence" value="ECO:0007669"/>
    <property type="project" value="UniProtKB-UniRule"/>
</dbReference>
<dbReference type="CDD" id="cd08646">
    <property type="entry name" value="FMT_core_Met-tRNA-FMT_N"/>
    <property type="match status" value="1"/>
</dbReference>
<dbReference type="CDD" id="cd08704">
    <property type="entry name" value="Met_tRNA_FMT_C"/>
    <property type="match status" value="1"/>
</dbReference>
<dbReference type="FunFam" id="3.40.50.12230:FF:000001">
    <property type="entry name" value="Methionyl-tRNA formyltransferase"/>
    <property type="match status" value="1"/>
</dbReference>
<dbReference type="Gene3D" id="3.10.25.10">
    <property type="entry name" value="Formyl transferase, C-terminal domain"/>
    <property type="match status" value="1"/>
</dbReference>
<dbReference type="Gene3D" id="3.40.50.170">
    <property type="entry name" value="Formyl transferase, N-terminal domain"/>
    <property type="match status" value="1"/>
</dbReference>
<dbReference type="HAMAP" id="MF_00182">
    <property type="entry name" value="Formyl_trans"/>
    <property type="match status" value="1"/>
</dbReference>
<dbReference type="InterPro" id="IPR005794">
    <property type="entry name" value="Fmt"/>
</dbReference>
<dbReference type="InterPro" id="IPR005793">
    <property type="entry name" value="Formyl_trans_C"/>
</dbReference>
<dbReference type="InterPro" id="IPR037022">
    <property type="entry name" value="Formyl_trans_C_sf"/>
</dbReference>
<dbReference type="InterPro" id="IPR002376">
    <property type="entry name" value="Formyl_transf_N"/>
</dbReference>
<dbReference type="InterPro" id="IPR036477">
    <property type="entry name" value="Formyl_transf_N_sf"/>
</dbReference>
<dbReference type="InterPro" id="IPR011034">
    <property type="entry name" value="Formyl_transferase-like_C_sf"/>
</dbReference>
<dbReference type="InterPro" id="IPR044135">
    <property type="entry name" value="Met-tRNA-FMT_C"/>
</dbReference>
<dbReference type="InterPro" id="IPR041711">
    <property type="entry name" value="Met-tRNA-FMT_N"/>
</dbReference>
<dbReference type="NCBIfam" id="TIGR00460">
    <property type="entry name" value="fmt"/>
    <property type="match status" value="1"/>
</dbReference>
<dbReference type="PANTHER" id="PTHR11138">
    <property type="entry name" value="METHIONYL-TRNA FORMYLTRANSFERASE"/>
    <property type="match status" value="1"/>
</dbReference>
<dbReference type="PANTHER" id="PTHR11138:SF5">
    <property type="entry name" value="METHIONYL-TRNA FORMYLTRANSFERASE, MITOCHONDRIAL"/>
    <property type="match status" value="1"/>
</dbReference>
<dbReference type="Pfam" id="PF02911">
    <property type="entry name" value="Formyl_trans_C"/>
    <property type="match status" value="1"/>
</dbReference>
<dbReference type="Pfam" id="PF00551">
    <property type="entry name" value="Formyl_trans_N"/>
    <property type="match status" value="1"/>
</dbReference>
<dbReference type="SUPFAM" id="SSF50486">
    <property type="entry name" value="FMT C-terminal domain-like"/>
    <property type="match status" value="1"/>
</dbReference>
<dbReference type="SUPFAM" id="SSF53328">
    <property type="entry name" value="Formyltransferase"/>
    <property type="match status" value="1"/>
</dbReference>
<sequence>MTAWRVVFMGTPDFATGTLQALLDGPDTVVAVFTQPDKPVGRGMKMQKTPVKQLAEQHGIPVYQPNRLREAEAVTALRALRPDVVVVVAYGQILSREVLEIPTHGCINVHASLLPRWRGAAPIQRAILAGDAQSGVTIMAMEEGLDTGPMYSTVVQSIDNHTTGGQLHDQLMAAGGGLLVETLARIKHEGLTPQIQPEQGVTYAAKLKKEEGLVDWSQPAIQIQRAVQAFDPWPCAFTLWQGKPLKLFAASVVVGHGTPGEVIEVEKDGFVVACGDGALRVAQVQAAGKKRMSSGEWLRGHGVKQGERLGEG</sequence>
<name>FMT_MAGMM</name>
<accession>A0L3X7</accession>
<proteinExistence type="inferred from homology"/>
<feature type="chain" id="PRO_1000098416" description="Methionyl-tRNA formyltransferase">
    <location>
        <begin position="1"/>
        <end position="312"/>
    </location>
</feature>
<feature type="binding site" evidence="1">
    <location>
        <begin position="112"/>
        <end position="115"/>
    </location>
    <ligand>
        <name>(6S)-5,6,7,8-tetrahydrofolate</name>
        <dbReference type="ChEBI" id="CHEBI:57453"/>
    </ligand>
</feature>
<evidence type="ECO:0000255" key="1">
    <source>
        <dbReference type="HAMAP-Rule" id="MF_00182"/>
    </source>
</evidence>